<accession>B7LFV7</accession>
<sequence>MLVWLAEHLVKYYSGFNVFSYLTFRAIVSLLTALFISLWMGPRMIAHLQKLSFGQVVRNDGPESHFSKRGTPTMGGIMILTAIVISVLLWAYPSNPYVWCVLVVLVGYGVIGFVDDYRKVVRKDTKGLIARWKYFWMSVIALGVAFALYLAGKDTPATQLVVPFFKDVMPQLGLFYILLAYFVIVGTGNAVNLTDGLDGLAIMPTVFVAGGFALVAWATGNMNFASYLHIPYLRHAGELVIVCTAIVGAGLGFLWFNTYPAQVFMGDVGSLALGGALGIIAVLLRQEFLLVIMGGVFVVETLSVILQVGSFKLRGQRIFRMAPIHHHYELKGWPEPRVIVRFWIISLMLVLIGLATLKVR</sequence>
<reference key="1">
    <citation type="journal article" date="2009" name="PLoS Genet.">
        <title>Organised genome dynamics in the Escherichia coli species results in highly diverse adaptive paths.</title>
        <authorList>
            <person name="Touchon M."/>
            <person name="Hoede C."/>
            <person name="Tenaillon O."/>
            <person name="Barbe V."/>
            <person name="Baeriswyl S."/>
            <person name="Bidet P."/>
            <person name="Bingen E."/>
            <person name="Bonacorsi S."/>
            <person name="Bouchier C."/>
            <person name="Bouvet O."/>
            <person name="Calteau A."/>
            <person name="Chiapello H."/>
            <person name="Clermont O."/>
            <person name="Cruveiller S."/>
            <person name="Danchin A."/>
            <person name="Diard M."/>
            <person name="Dossat C."/>
            <person name="Karoui M.E."/>
            <person name="Frapy E."/>
            <person name="Garry L."/>
            <person name="Ghigo J.M."/>
            <person name="Gilles A.M."/>
            <person name="Johnson J."/>
            <person name="Le Bouguenec C."/>
            <person name="Lescat M."/>
            <person name="Mangenot S."/>
            <person name="Martinez-Jehanne V."/>
            <person name="Matic I."/>
            <person name="Nassif X."/>
            <person name="Oztas S."/>
            <person name="Petit M.A."/>
            <person name="Pichon C."/>
            <person name="Rouy Z."/>
            <person name="Ruf C.S."/>
            <person name="Schneider D."/>
            <person name="Tourret J."/>
            <person name="Vacherie B."/>
            <person name="Vallenet D."/>
            <person name="Medigue C."/>
            <person name="Rocha E.P.C."/>
            <person name="Denamur E."/>
        </authorList>
    </citation>
    <scope>NUCLEOTIDE SEQUENCE [LARGE SCALE GENOMIC DNA]</scope>
    <source>
        <strain>55989 / EAEC</strain>
    </source>
</reference>
<gene>
    <name evidence="1" type="primary">mraY</name>
    <name type="ordered locus">EC55989_0083</name>
</gene>
<dbReference type="EC" id="2.7.8.13" evidence="1"/>
<dbReference type="EMBL" id="CU928145">
    <property type="protein sequence ID" value="CAU95971.1"/>
    <property type="molecule type" value="Genomic_DNA"/>
</dbReference>
<dbReference type="RefSeq" id="WP_000964131.1">
    <property type="nucleotide sequence ID" value="NZ_CP028304.1"/>
</dbReference>
<dbReference type="SMR" id="B7LFV7"/>
<dbReference type="GeneID" id="93777347"/>
<dbReference type="KEGG" id="eck:EC55989_0083"/>
<dbReference type="HOGENOM" id="CLU_023982_0_0_6"/>
<dbReference type="UniPathway" id="UPA00219"/>
<dbReference type="Proteomes" id="UP000000746">
    <property type="component" value="Chromosome"/>
</dbReference>
<dbReference type="GO" id="GO:0005886">
    <property type="term" value="C:plasma membrane"/>
    <property type="evidence" value="ECO:0007669"/>
    <property type="project" value="UniProtKB-SubCell"/>
</dbReference>
<dbReference type="GO" id="GO:0046872">
    <property type="term" value="F:metal ion binding"/>
    <property type="evidence" value="ECO:0007669"/>
    <property type="project" value="UniProtKB-KW"/>
</dbReference>
<dbReference type="GO" id="GO:0008963">
    <property type="term" value="F:phospho-N-acetylmuramoyl-pentapeptide-transferase activity"/>
    <property type="evidence" value="ECO:0007669"/>
    <property type="project" value="UniProtKB-UniRule"/>
</dbReference>
<dbReference type="GO" id="GO:0051992">
    <property type="term" value="F:UDP-N-acetylmuramoyl-L-alanyl-D-glutamyl-meso-2,6-diaminopimelyl-D-alanyl-D-alanine:undecaprenyl-phosphate transferase activity"/>
    <property type="evidence" value="ECO:0007669"/>
    <property type="project" value="RHEA"/>
</dbReference>
<dbReference type="GO" id="GO:0051301">
    <property type="term" value="P:cell division"/>
    <property type="evidence" value="ECO:0007669"/>
    <property type="project" value="UniProtKB-KW"/>
</dbReference>
<dbReference type="GO" id="GO:0071555">
    <property type="term" value="P:cell wall organization"/>
    <property type="evidence" value="ECO:0007669"/>
    <property type="project" value="UniProtKB-KW"/>
</dbReference>
<dbReference type="GO" id="GO:0009252">
    <property type="term" value="P:peptidoglycan biosynthetic process"/>
    <property type="evidence" value="ECO:0007669"/>
    <property type="project" value="UniProtKB-UniRule"/>
</dbReference>
<dbReference type="GO" id="GO:0008360">
    <property type="term" value="P:regulation of cell shape"/>
    <property type="evidence" value="ECO:0007669"/>
    <property type="project" value="UniProtKB-KW"/>
</dbReference>
<dbReference type="CDD" id="cd06852">
    <property type="entry name" value="GT_MraY"/>
    <property type="match status" value="1"/>
</dbReference>
<dbReference type="HAMAP" id="MF_00038">
    <property type="entry name" value="MraY"/>
    <property type="match status" value="1"/>
</dbReference>
<dbReference type="InterPro" id="IPR000715">
    <property type="entry name" value="Glycosyl_transferase_4"/>
</dbReference>
<dbReference type="InterPro" id="IPR003524">
    <property type="entry name" value="PNAcMuramoyl-5peptid_Trfase"/>
</dbReference>
<dbReference type="InterPro" id="IPR018480">
    <property type="entry name" value="PNAcMuramoyl-5peptid_Trfase_CS"/>
</dbReference>
<dbReference type="NCBIfam" id="TIGR00445">
    <property type="entry name" value="mraY"/>
    <property type="match status" value="1"/>
</dbReference>
<dbReference type="PANTHER" id="PTHR22926">
    <property type="entry name" value="PHOSPHO-N-ACETYLMURAMOYL-PENTAPEPTIDE-TRANSFERASE"/>
    <property type="match status" value="1"/>
</dbReference>
<dbReference type="PANTHER" id="PTHR22926:SF5">
    <property type="entry name" value="PHOSPHO-N-ACETYLMURAMOYL-PENTAPEPTIDE-TRANSFERASE HOMOLOG"/>
    <property type="match status" value="1"/>
</dbReference>
<dbReference type="Pfam" id="PF00953">
    <property type="entry name" value="Glycos_transf_4"/>
    <property type="match status" value="1"/>
</dbReference>
<dbReference type="Pfam" id="PF10555">
    <property type="entry name" value="MraY_sig1"/>
    <property type="match status" value="1"/>
</dbReference>
<dbReference type="PROSITE" id="PS01347">
    <property type="entry name" value="MRAY_1"/>
    <property type="match status" value="1"/>
</dbReference>
<dbReference type="PROSITE" id="PS01348">
    <property type="entry name" value="MRAY_2"/>
    <property type="match status" value="1"/>
</dbReference>
<organism>
    <name type="scientific">Escherichia coli (strain 55989 / EAEC)</name>
    <dbReference type="NCBI Taxonomy" id="585055"/>
    <lineage>
        <taxon>Bacteria</taxon>
        <taxon>Pseudomonadati</taxon>
        <taxon>Pseudomonadota</taxon>
        <taxon>Gammaproteobacteria</taxon>
        <taxon>Enterobacterales</taxon>
        <taxon>Enterobacteriaceae</taxon>
        <taxon>Escherichia</taxon>
    </lineage>
</organism>
<feature type="chain" id="PRO_1000117180" description="Phospho-N-acetylmuramoyl-pentapeptide-transferase">
    <location>
        <begin position="1"/>
        <end position="360"/>
    </location>
</feature>
<feature type="topological domain" description="Periplasmic" evidence="1">
    <location>
        <begin position="1"/>
        <end position="25"/>
    </location>
</feature>
<feature type="transmembrane region" description="Helical" evidence="1">
    <location>
        <begin position="26"/>
        <end position="46"/>
    </location>
</feature>
<feature type="topological domain" description="Cytoplasmic" evidence="1">
    <location>
        <begin position="47"/>
        <end position="71"/>
    </location>
</feature>
<feature type="transmembrane region" description="Helical" evidence="1">
    <location>
        <begin position="72"/>
        <end position="92"/>
    </location>
</feature>
<feature type="topological domain" description="Periplasmic" evidence="1">
    <location>
        <position position="93"/>
    </location>
</feature>
<feature type="transmembrane region" description="Helical" evidence="1">
    <location>
        <begin position="94"/>
        <end position="114"/>
    </location>
</feature>
<feature type="topological domain" description="Cytoplasmic" evidence="1">
    <location>
        <begin position="115"/>
        <end position="131"/>
    </location>
</feature>
<feature type="transmembrane region" description="Helical" evidence="1">
    <location>
        <begin position="132"/>
        <end position="152"/>
    </location>
</feature>
<feature type="topological domain" description="Periplasmic" evidence="1">
    <location>
        <begin position="153"/>
        <end position="167"/>
    </location>
</feature>
<feature type="transmembrane region" description="Helical" evidence="1">
    <location>
        <begin position="168"/>
        <end position="188"/>
    </location>
</feature>
<feature type="topological domain" description="Cytoplasmic" evidence="1">
    <location>
        <begin position="189"/>
        <end position="198"/>
    </location>
</feature>
<feature type="transmembrane region" description="Helical" evidence="1">
    <location>
        <begin position="199"/>
        <end position="219"/>
    </location>
</feature>
<feature type="topological domain" description="Periplasmic" evidence="1">
    <location>
        <begin position="220"/>
        <end position="235"/>
    </location>
</feature>
<feature type="transmembrane region" description="Helical" evidence="1">
    <location>
        <begin position="236"/>
        <end position="256"/>
    </location>
</feature>
<feature type="topological domain" description="Cytoplasmic" evidence="1">
    <location>
        <begin position="257"/>
        <end position="262"/>
    </location>
</feature>
<feature type="transmembrane region" description="Helical" evidence="1">
    <location>
        <begin position="263"/>
        <end position="283"/>
    </location>
</feature>
<feature type="topological domain" description="Periplasmic" evidence="1">
    <location>
        <begin position="284"/>
        <end position="287"/>
    </location>
</feature>
<feature type="transmembrane region" description="Helical" evidence="1">
    <location>
        <begin position="288"/>
        <end position="308"/>
    </location>
</feature>
<feature type="topological domain" description="Cytoplasmic" evidence="1">
    <location>
        <begin position="309"/>
        <end position="337"/>
    </location>
</feature>
<feature type="transmembrane region" description="Helical" evidence="1">
    <location>
        <begin position="338"/>
        <end position="358"/>
    </location>
</feature>
<feature type="topological domain" description="Periplasmic" evidence="1">
    <location>
        <begin position="359"/>
        <end position="360"/>
    </location>
</feature>
<proteinExistence type="inferred from homology"/>
<evidence type="ECO:0000255" key="1">
    <source>
        <dbReference type="HAMAP-Rule" id="MF_00038"/>
    </source>
</evidence>
<name>MRAY_ECO55</name>
<protein>
    <recommendedName>
        <fullName evidence="1">Phospho-N-acetylmuramoyl-pentapeptide-transferase</fullName>
        <ecNumber evidence="1">2.7.8.13</ecNumber>
    </recommendedName>
    <alternativeName>
        <fullName evidence="1">UDP-MurNAc-pentapeptide phosphotransferase</fullName>
    </alternativeName>
</protein>
<keyword id="KW-0131">Cell cycle</keyword>
<keyword id="KW-0132">Cell division</keyword>
<keyword id="KW-0997">Cell inner membrane</keyword>
<keyword id="KW-1003">Cell membrane</keyword>
<keyword id="KW-0133">Cell shape</keyword>
<keyword id="KW-0961">Cell wall biogenesis/degradation</keyword>
<keyword id="KW-0460">Magnesium</keyword>
<keyword id="KW-0472">Membrane</keyword>
<keyword id="KW-0479">Metal-binding</keyword>
<keyword id="KW-0573">Peptidoglycan synthesis</keyword>
<keyword id="KW-1185">Reference proteome</keyword>
<keyword id="KW-0808">Transferase</keyword>
<keyword id="KW-0812">Transmembrane</keyword>
<keyword id="KW-1133">Transmembrane helix</keyword>
<comment type="function">
    <text evidence="1">Catalyzes the initial step of the lipid cycle reactions in the biosynthesis of the cell wall peptidoglycan: transfers peptidoglycan precursor phospho-MurNAc-pentapeptide from UDP-MurNAc-pentapeptide onto the lipid carrier undecaprenyl phosphate, yielding undecaprenyl-pyrophosphoryl-MurNAc-pentapeptide, known as lipid I.</text>
</comment>
<comment type="catalytic activity">
    <reaction evidence="1">
        <text>UDP-N-acetyl-alpha-D-muramoyl-L-alanyl-gamma-D-glutamyl-meso-2,6-diaminopimeloyl-D-alanyl-D-alanine + di-trans,octa-cis-undecaprenyl phosphate = di-trans,octa-cis-undecaprenyl diphospho-N-acetyl-alpha-D-muramoyl-L-alanyl-D-glutamyl-meso-2,6-diaminopimeloyl-D-alanyl-D-alanine + UMP</text>
        <dbReference type="Rhea" id="RHEA:28386"/>
        <dbReference type="ChEBI" id="CHEBI:57865"/>
        <dbReference type="ChEBI" id="CHEBI:60392"/>
        <dbReference type="ChEBI" id="CHEBI:61386"/>
        <dbReference type="ChEBI" id="CHEBI:61387"/>
        <dbReference type="EC" id="2.7.8.13"/>
    </reaction>
</comment>
<comment type="cofactor">
    <cofactor evidence="1">
        <name>Mg(2+)</name>
        <dbReference type="ChEBI" id="CHEBI:18420"/>
    </cofactor>
</comment>
<comment type="pathway">
    <text evidence="1">Cell wall biogenesis; peptidoglycan biosynthesis.</text>
</comment>
<comment type="subcellular location">
    <subcellularLocation>
        <location evidence="1">Cell inner membrane</location>
        <topology evidence="1">Multi-pass membrane protein</topology>
    </subcellularLocation>
</comment>
<comment type="similarity">
    <text evidence="1">Belongs to the glycosyltransferase 4 family. MraY subfamily.</text>
</comment>